<sequence>MARRPRHSIYSSDDDEEDVEMYDHDYDGLLPKAGKRHLGKTRWTREEDEKLKKLVEQNGTEDWKVIASFLPNRTDVQCQHRWQKVLNPELIKGPWTKEEDQRVIELVQKYGPKRWSVIAKHLKGRIGKQCRERWHNHLNPEVKKTSWTEEEDRIIYQAHKRLGNRWAEIAKLLPGRTDNAIKNHWNSTMRRKVEQEGYLQESSKAGLPSATTGFQKSSHLMAFAHNPPAGPLPGAGQAPLGSDYPYYHIAEPQNVPGQIPYPVALHVNIVNVPQPAAAAIQRHYNDEDPEKEKRIKELELLLMSTENELKGQQALPTQNHTANYPGWHSTTVADNTRTSGDNAPVSCLGEHHHCTPSPPVDHGCLPEESASPARCMIVHQSNILDNVKNLLEFAETLQLIDSFLNTSSNHENLNLDNPALTSTPVCGHKMSVTTPFHRDQPFKTQKENHVFRTPAIKRSILESSPRTPTPFKNALAAQEIKYGPLKMLPQTPTHLVEDLQDVIKQESEESAIVAGLHESGPPLLKKIKQEVESPTDKAGNFFCSNHWEGENLNTQLFTHASTMEDVPNLLTSSILKMPVSEEEGSFHKAFAVPRNRPLASPMQHLNNAWESASCGKTEDQMALTDQARKYMAAFPTRTLVM</sequence>
<comment type="function">
    <text>Transcriptional activator; DNA-binding protein that specifically recognize the sequence 5'-YAAC[GT]G-3'. Plays an important role in the control of proliferation and differentiation of hematopoietic progenitor cells.</text>
</comment>
<comment type="interaction">
    <interactant intactId="EBI-6502562">
        <id>P01103</id>
    </interactant>
    <interactant intactId="EBI-716596">
        <id>Q08752</id>
        <label>PPID</label>
    </interactant>
    <organismsDiffer>true</organismsDiffer>
    <experiments>2</experiments>
</comment>
<comment type="subcellular location">
    <subcellularLocation>
        <location>Nucleus</location>
    </subcellularLocation>
</comment>
<comment type="alternative products">
    <event type="alternative splicing"/>
    <isoform>
        <id>P01103-1</id>
        <name>1</name>
        <sequence type="displayed"/>
    </isoform>
    <isoform>
        <id>P01103-2</id>
        <name>2</name>
        <sequence type="described" ref="VSP_010978"/>
    </isoform>
</comment>
<comment type="domain">
    <text>Comprised of 3 domains; an N-terminal DNA-binding domain, a centrally located transcriptional activation domain and a C-terminal domain involved in transcriptional repression.</text>
</comment>
<comment type="domain">
    <text>Truncation of either the N- or C-terminal of C-Myb leads to increased transformation and transactivation potential.</text>
</comment>
<name>MYB_CHICK</name>
<gene>
    <name type="primary">MYB</name>
</gene>
<evidence type="ECO:0000250" key="1"/>
<evidence type="ECO:0000255" key="2">
    <source>
        <dbReference type="PROSITE-ProRule" id="PRU00625"/>
    </source>
</evidence>
<evidence type="ECO:0000256" key="3">
    <source>
        <dbReference type="SAM" id="MobiDB-lite"/>
    </source>
</evidence>
<evidence type="ECO:0000305" key="4"/>
<evidence type="ECO:0007829" key="5">
    <source>
        <dbReference type="PDB" id="5SVH"/>
    </source>
</evidence>
<reference key="1">
    <citation type="journal article" date="1986" name="Mol. Cell. Biol.">
        <title>Structure of the protein encoded by the chicken proto-oncogene c-myb.</title>
        <authorList>
            <person name="Gerondakis S."/>
            <person name="Bishop J.M."/>
        </authorList>
    </citation>
    <scope>NUCLEOTIDE SEQUENCE [MRNA]</scope>
</reference>
<reference key="2">
    <citation type="journal article" date="1986" name="Nature">
        <title>Nucleotide sequence of chicken c-myb complementary DNA and implications for myb oncogene activation.</title>
        <authorList>
            <person name="Rosson D."/>
            <person name="Reddy P."/>
        </authorList>
    </citation>
    <scope>NUCLEOTIDE SEQUENCE [MRNA]</scope>
</reference>
<reference key="3">
    <citation type="journal article" date="1989" name="Nucleic Acids Res.">
        <title>Transcription of the chicken myb proto-oncogene starts within a CpG island.</title>
        <authorList>
            <person name="Dvorak M."/>
            <person name="Urbanek P."/>
            <person name="Bartunek P."/>
            <person name="Paces V."/>
            <person name="Vlach J."/>
            <person name="Pecenka V."/>
            <person name="Arnold L."/>
            <person name="Travnicek M."/>
        </authorList>
    </citation>
    <scope>NUCLEOTIDE SEQUENCE [GENOMIC DNA] OF 1-176</scope>
    <source>
        <strain>Brown leghorn</strain>
        <tissue>Thymus</tissue>
    </source>
</reference>
<reference key="4">
    <citation type="journal article" date="1988" name="Nucleic Acids Res.">
        <title>Nucleotide sequence of chicken myb proto-oncogene promoter region: detection of an evolutionarily conserved element.</title>
        <authorList>
            <person name="Urbanek P."/>
            <person name="Dvorak P."/>
            <person name="Bartunek M."/>
            <person name="Vlach P."/>
            <person name="Pecenka J."/>
            <person name="Paces V."/>
            <person name="Travnicek M."/>
        </authorList>
    </citation>
    <scope>NUCLEOTIDE SEQUENCE [GENOMIC DNA] OF 1-7</scope>
</reference>
<reference key="5">
    <citation type="journal article" date="1989" name="Mol. Cell. Biol.">
        <title>Structural organization of upstream exons and distribution of transcription start sites in the chicken c-myb gene.</title>
        <authorList>
            <person name="Hahn S.L."/>
            <person name="Hahn M."/>
            <person name="Hayward W.S."/>
        </authorList>
    </citation>
    <scope>NUCLEOTIDE SEQUENCE [GENOMIC DNA] OF 1-7</scope>
</reference>
<reference key="6">
    <citation type="journal article" date="1988" name="FEBS Lett.">
        <title>Organization of 5'-proximal c-myb exons in chicken DNA. Implications for c-myb tissue-specific transcription.</title>
        <authorList>
            <person name="Soret J."/>
            <person name="Vellard M."/>
            <person name="Martinerie C."/>
            <person name="Perbal B."/>
        </authorList>
    </citation>
    <scope>NUCLEOTIDE SEQUENCE OF 21-79 AND 73-79</scope>
    <source>
        <tissue>Thymus</tissue>
    </source>
</reference>
<reference key="7">
    <citation type="journal article" date="1993" name="Oncogene">
        <title>Alternative splicing of the chicken c-myb exon 9A.</title>
        <authorList>
            <person name="Schuur E.R."/>
            <person name="Dasgupta P."/>
            <person name="Reddy E.P."/>
            <person name="Rabinovich J.M."/>
            <person name="Baluda M.A."/>
        </authorList>
    </citation>
    <scope>ALTERNATIVE SPLICING</scope>
</reference>
<reference key="8">
    <citation type="journal article" date="1991" name="Mol. Cell. Biol.">
        <title>Protein truncation is required for the activation of the c-myb proto-oncogene.</title>
        <authorList>
            <person name="Graesser F.A."/>
            <person name="Graf T."/>
            <person name="Lipsick J.S."/>
        </authorList>
    </citation>
    <scope>TRUNCATION MUTATIONS</scope>
</reference>
<reference key="9">
    <citation type="journal article" date="1991" name="Protein Eng.">
        <title>Proposed structure for the DNA-binding domain of the Myb oncoprotein based on model building and mutational analysis.</title>
        <authorList>
            <person name="Frampton J."/>
            <person name="Gibson T.J."/>
            <person name="Ness S.A."/>
            <person name="Doederlein G."/>
            <person name="Graf T."/>
        </authorList>
    </citation>
    <scope>3D-STRUCTURE MODELING OF 142-192</scope>
</reference>
<keyword id="KW-0002">3D-structure</keyword>
<keyword id="KW-0010">Activator</keyword>
<keyword id="KW-0025">Alternative splicing</keyword>
<keyword id="KW-0238">DNA-binding</keyword>
<keyword id="KW-0539">Nucleus</keyword>
<keyword id="KW-0656">Proto-oncogene</keyword>
<keyword id="KW-1185">Reference proteome</keyword>
<keyword id="KW-0677">Repeat</keyword>
<keyword id="KW-0804">Transcription</keyword>
<keyword id="KW-0805">Transcription regulation</keyword>
<protein>
    <recommendedName>
        <fullName>Transcriptional activator Myb</fullName>
    </recommendedName>
    <alternativeName>
        <fullName>Proto-oncogene c-Myb</fullName>
    </alternativeName>
</protein>
<accession>P01103</accession>
<accession>P87467</accession>
<accession>Q788R2</accession>
<organism>
    <name type="scientific">Gallus gallus</name>
    <name type="common">Chicken</name>
    <dbReference type="NCBI Taxonomy" id="9031"/>
    <lineage>
        <taxon>Eukaryota</taxon>
        <taxon>Metazoa</taxon>
        <taxon>Chordata</taxon>
        <taxon>Craniata</taxon>
        <taxon>Vertebrata</taxon>
        <taxon>Euteleostomi</taxon>
        <taxon>Archelosauria</taxon>
        <taxon>Archosauria</taxon>
        <taxon>Dinosauria</taxon>
        <taxon>Saurischia</taxon>
        <taxon>Theropoda</taxon>
        <taxon>Coelurosauria</taxon>
        <taxon>Aves</taxon>
        <taxon>Neognathae</taxon>
        <taxon>Galloanserae</taxon>
        <taxon>Galliformes</taxon>
        <taxon>Phasianidae</taxon>
        <taxon>Phasianinae</taxon>
        <taxon>Gallus</taxon>
    </lineage>
</organism>
<proteinExistence type="evidence at protein level"/>
<dbReference type="EMBL" id="M14129">
    <property type="protein sequence ID" value="AAA48962.1"/>
    <property type="molecule type" value="mRNA"/>
</dbReference>
<dbReference type="EMBL" id="X03477">
    <property type="protein sequence ID" value="CAA27197.1"/>
    <property type="status" value="ALT_SEQ"/>
    <property type="molecule type" value="mRNA"/>
</dbReference>
<dbReference type="EMBL" id="X14612">
    <property type="protein sequence ID" value="CAA32767.1"/>
    <property type="molecule type" value="Genomic_DNA"/>
</dbReference>
<dbReference type="EMBL" id="X12495">
    <property type="protein sequence ID" value="CAA31015.1"/>
    <property type="molecule type" value="Genomic_DNA"/>
</dbReference>
<dbReference type="EMBL" id="M24373">
    <property type="protein sequence ID" value="AAA48697.1"/>
    <property type="molecule type" value="Genomic_DNA"/>
</dbReference>
<dbReference type="EMBL" id="M35509">
    <property type="protein sequence ID" value="AAA48698.1"/>
    <property type="molecule type" value="Genomic_DNA"/>
</dbReference>
<dbReference type="EMBL" id="M35506">
    <property type="protein sequence ID" value="AAA48698.1"/>
    <property type="status" value="JOINED"/>
    <property type="molecule type" value="Genomic_DNA"/>
</dbReference>
<dbReference type="EMBL" id="M35507">
    <property type="protein sequence ID" value="AAA48698.1"/>
    <property type="status" value="JOINED"/>
    <property type="molecule type" value="Genomic_DNA"/>
</dbReference>
<dbReference type="EMBL" id="M35508">
    <property type="protein sequence ID" value="AAA48698.1"/>
    <property type="status" value="JOINED"/>
    <property type="molecule type" value="Genomic_DNA"/>
</dbReference>
<dbReference type="EMBL" id="M35509">
    <property type="protein sequence ID" value="AAA48699.1"/>
    <property type="molecule type" value="Genomic_DNA"/>
</dbReference>
<dbReference type="EMBL" id="M35507">
    <property type="protein sequence ID" value="AAA48699.1"/>
    <property type="status" value="JOINED"/>
    <property type="molecule type" value="Genomic_DNA"/>
</dbReference>
<dbReference type="EMBL" id="M35508">
    <property type="protein sequence ID" value="AAA48699.1"/>
    <property type="status" value="JOINED"/>
    <property type="molecule type" value="Genomic_DNA"/>
</dbReference>
<dbReference type="EMBL" id="X73660">
    <property type="status" value="NOT_ANNOTATED_CDS"/>
    <property type="molecule type" value="mRNA"/>
</dbReference>
<dbReference type="PIR" id="A25075">
    <property type="entry name" value="TVCHM"/>
</dbReference>
<dbReference type="RefSeq" id="NP_990637.1">
    <property type="nucleotide sequence ID" value="NM_205306.1"/>
</dbReference>
<dbReference type="PDB" id="5SVH">
    <property type="method" value="X-ray"/>
    <property type="resolution" value="2.05 A"/>
    <property type="chains" value="B=291-315"/>
</dbReference>
<dbReference type="PDBsum" id="5SVH"/>
<dbReference type="BMRB" id="P01103"/>
<dbReference type="SMR" id="P01103"/>
<dbReference type="BioGRID" id="676504">
    <property type="interactions" value="1"/>
</dbReference>
<dbReference type="FunCoup" id="P01103">
    <property type="interactions" value="273"/>
</dbReference>
<dbReference type="IntAct" id="P01103">
    <property type="interactions" value="1"/>
</dbReference>
<dbReference type="STRING" id="9031.ENSGALP00000047691"/>
<dbReference type="BindingDB" id="P01103"/>
<dbReference type="ChEMBL" id="CHEMBL2380186"/>
<dbReference type="iPTMnet" id="P01103"/>
<dbReference type="PaxDb" id="9031-ENSGALP00000022584"/>
<dbReference type="GeneID" id="396244"/>
<dbReference type="KEGG" id="gga:396244"/>
<dbReference type="CTD" id="4602"/>
<dbReference type="VEuPathDB" id="HostDB:geneid_396244"/>
<dbReference type="eggNOG" id="KOG0048">
    <property type="taxonomic scope" value="Eukaryota"/>
</dbReference>
<dbReference type="InParanoid" id="P01103"/>
<dbReference type="OrthoDB" id="2143914at2759"/>
<dbReference type="PhylomeDB" id="P01103"/>
<dbReference type="PRO" id="PR:P01103"/>
<dbReference type="Proteomes" id="UP000000539">
    <property type="component" value="Unassembled WGS sequence"/>
</dbReference>
<dbReference type="GO" id="GO:0005654">
    <property type="term" value="C:nucleoplasm"/>
    <property type="evidence" value="ECO:0000304"/>
    <property type="project" value="Reactome"/>
</dbReference>
<dbReference type="GO" id="GO:0005634">
    <property type="term" value="C:nucleus"/>
    <property type="evidence" value="ECO:0000318"/>
    <property type="project" value="GO_Central"/>
</dbReference>
<dbReference type="GO" id="GO:0000981">
    <property type="term" value="F:DNA-binding transcription factor activity, RNA polymerase II-specific"/>
    <property type="evidence" value="ECO:0000318"/>
    <property type="project" value="GO_Central"/>
</dbReference>
<dbReference type="GO" id="GO:0000978">
    <property type="term" value="F:RNA polymerase II cis-regulatory region sequence-specific DNA binding"/>
    <property type="evidence" value="ECO:0000318"/>
    <property type="project" value="GO_Central"/>
</dbReference>
<dbReference type="GO" id="GO:0000278">
    <property type="term" value="P:mitotic cell cycle"/>
    <property type="evidence" value="ECO:0000318"/>
    <property type="project" value="GO_Central"/>
</dbReference>
<dbReference type="GO" id="GO:0045944">
    <property type="term" value="P:positive regulation of transcription by RNA polymerase II"/>
    <property type="evidence" value="ECO:0000318"/>
    <property type="project" value="GO_Central"/>
</dbReference>
<dbReference type="GO" id="GO:0010468">
    <property type="term" value="P:regulation of gene expression"/>
    <property type="evidence" value="ECO:0000304"/>
    <property type="project" value="AgBase"/>
</dbReference>
<dbReference type="CDD" id="cd00167">
    <property type="entry name" value="SANT"/>
    <property type="match status" value="3"/>
</dbReference>
<dbReference type="FunFam" id="1.10.10.60:FF:000010">
    <property type="entry name" value="Transcriptional activator Myb isoform A"/>
    <property type="match status" value="1"/>
</dbReference>
<dbReference type="FunFam" id="1.10.10.60:FF:000016">
    <property type="entry name" value="Transcriptional activator Myb isoform A"/>
    <property type="match status" value="1"/>
</dbReference>
<dbReference type="FunFam" id="1.10.10.60:FF:000042">
    <property type="entry name" value="Transcriptional activator Myb isoform A"/>
    <property type="match status" value="1"/>
</dbReference>
<dbReference type="Gene3D" id="1.10.10.60">
    <property type="entry name" value="Homeodomain-like"/>
    <property type="match status" value="3"/>
</dbReference>
<dbReference type="InterPro" id="IPR015395">
    <property type="entry name" value="C-myb_C"/>
</dbReference>
<dbReference type="InterPro" id="IPR009057">
    <property type="entry name" value="Homeodomain-like_sf"/>
</dbReference>
<dbReference type="InterPro" id="IPR017930">
    <property type="entry name" value="Myb_dom"/>
</dbReference>
<dbReference type="InterPro" id="IPR050560">
    <property type="entry name" value="MYB_TF"/>
</dbReference>
<dbReference type="InterPro" id="IPR001005">
    <property type="entry name" value="SANT/Myb"/>
</dbReference>
<dbReference type="InterPro" id="IPR012642">
    <property type="entry name" value="Tscrpt_reg_Wos2-domain"/>
</dbReference>
<dbReference type="PANTHER" id="PTHR45614">
    <property type="entry name" value="MYB PROTEIN-RELATED"/>
    <property type="match status" value="1"/>
</dbReference>
<dbReference type="PANTHER" id="PTHR45614:SF51">
    <property type="entry name" value="MYB-LIKE DNA-BINDING PROTEIN BAS1"/>
    <property type="match status" value="1"/>
</dbReference>
<dbReference type="Pfam" id="PF09316">
    <property type="entry name" value="Cmyb_C"/>
    <property type="match status" value="1"/>
</dbReference>
<dbReference type="Pfam" id="PF07988">
    <property type="entry name" value="LMSTEN"/>
    <property type="match status" value="1"/>
</dbReference>
<dbReference type="Pfam" id="PF00249">
    <property type="entry name" value="Myb_DNA-binding"/>
    <property type="match status" value="3"/>
</dbReference>
<dbReference type="SMART" id="SM00717">
    <property type="entry name" value="SANT"/>
    <property type="match status" value="3"/>
</dbReference>
<dbReference type="SUPFAM" id="SSF46689">
    <property type="entry name" value="Homeodomain-like"/>
    <property type="match status" value="2"/>
</dbReference>
<dbReference type="PROSITE" id="PS51294">
    <property type="entry name" value="HTH_MYB"/>
    <property type="match status" value="3"/>
</dbReference>
<feature type="chain" id="PRO_0000197050" description="Transcriptional activator Myb">
    <location>
        <begin position="1"/>
        <end position="641"/>
    </location>
</feature>
<feature type="domain" description="HTH myb-type 1" evidence="2">
    <location>
        <begin position="35"/>
        <end position="86"/>
    </location>
</feature>
<feature type="domain" description="HTH myb-type 2" evidence="2">
    <location>
        <begin position="87"/>
        <end position="142"/>
    </location>
</feature>
<feature type="domain" description="HTH myb-type 3" evidence="2">
    <location>
        <begin position="143"/>
        <end position="193"/>
    </location>
</feature>
<feature type="DNA-binding region" description="H-T-H motif" evidence="2">
    <location>
        <begin position="63"/>
        <end position="86"/>
    </location>
</feature>
<feature type="DNA-binding region" description="H-T-H motif" evidence="2">
    <location>
        <begin position="115"/>
        <end position="138"/>
    </location>
</feature>
<feature type="DNA-binding region" description="H-T-H motif" evidence="2">
    <location>
        <begin position="166"/>
        <end position="189"/>
    </location>
</feature>
<feature type="region of interest" description="Transcriptional activation domain" evidence="1">
    <location>
        <begin position="275"/>
        <end position="327"/>
    </location>
</feature>
<feature type="region of interest" description="Disordered" evidence="3">
    <location>
        <begin position="317"/>
        <end position="338"/>
    </location>
</feature>
<feature type="region of interest" description="Negative regulatory domain" evidence="1">
    <location>
        <begin position="328"/>
        <end position="465"/>
    </location>
</feature>
<feature type="region of interest" description="Leucine-zipper">
    <location>
        <begin position="376"/>
        <end position="397"/>
    </location>
</feature>
<feature type="splice variant" id="VSP_010978" description="In isoform 2." evidence="4">
    <original>S</original>
    <variation>SDPSSWGDLSSFEFFEDTDILAGKATSGTAVQLQHGGASACRPPGLPISNLSKTMSSQSPPGSPKSLSASQGSVAPWVLRKRRGHASPLASGPSSTLGLADGSSSTSKHSPVKSLPFSPSQ</variation>
    <location>
        <position position="402"/>
    </location>
</feature>
<feature type="helix" evidence="5">
    <location>
        <begin position="291"/>
        <end position="303"/>
    </location>
</feature>